<feature type="chain" id="PRO_0000414555" description="Cell division protein FtsL">
    <location>
        <begin position="1"/>
        <end position="109"/>
    </location>
</feature>
<feature type="topological domain" description="Cytoplasmic" evidence="1">
    <location>
        <begin position="1"/>
        <end position="3"/>
    </location>
</feature>
<feature type="transmembrane region" description="Helical" evidence="1">
    <location>
        <begin position="4"/>
        <end position="21"/>
    </location>
</feature>
<feature type="topological domain" description="Periplasmic" evidence="1">
    <location>
        <begin position="22"/>
        <end position="109"/>
    </location>
</feature>
<protein>
    <recommendedName>
        <fullName evidence="1">Cell division protein FtsL</fullName>
    </recommendedName>
</protein>
<accession>Q63QJ0</accession>
<sequence>MSRLNIFLLIIVMGCALSVVNSTNQQRQIFIQLQRAQSQEHQLQQDYAQLQYQQSALSKTSRIEQLATSSLKMQPITTGRTQYLTLSPGAAKAVDVPLPASAAPTGGAR</sequence>
<gene>
    <name evidence="1" type="primary">ftsL</name>
    <name type="ordered locus">BPSL3032</name>
</gene>
<evidence type="ECO:0000255" key="1">
    <source>
        <dbReference type="HAMAP-Rule" id="MF_00910"/>
    </source>
</evidence>
<proteinExistence type="inferred from homology"/>
<keyword id="KW-0131">Cell cycle</keyword>
<keyword id="KW-0132">Cell division</keyword>
<keyword id="KW-0997">Cell inner membrane</keyword>
<keyword id="KW-1003">Cell membrane</keyword>
<keyword id="KW-0472">Membrane</keyword>
<keyword id="KW-1185">Reference proteome</keyword>
<keyword id="KW-0812">Transmembrane</keyword>
<keyword id="KW-1133">Transmembrane helix</keyword>
<name>FTSL_BURPS</name>
<organism>
    <name type="scientific">Burkholderia pseudomallei (strain K96243)</name>
    <dbReference type="NCBI Taxonomy" id="272560"/>
    <lineage>
        <taxon>Bacteria</taxon>
        <taxon>Pseudomonadati</taxon>
        <taxon>Pseudomonadota</taxon>
        <taxon>Betaproteobacteria</taxon>
        <taxon>Burkholderiales</taxon>
        <taxon>Burkholderiaceae</taxon>
        <taxon>Burkholderia</taxon>
        <taxon>pseudomallei group</taxon>
    </lineage>
</organism>
<dbReference type="EMBL" id="BX571965">
    <property type="protein sequence ID" value="CAH37044.1"/>
    <property type="molecule type" value="Genomic_DNA"/>
</dbReference>
<dbReference type="RefSeq" id="WP_004527786.1">
    <property type="nucleotide sequence ID" value="NZ_CP009538.1"/>
</dbReference>
<dbReference type="RefSeq" id="YP_109628.1">
    <property type="nucleotide sequence ID" value="NC_006350.1"/>
</dbReference>
<dbReference type="SMR" id="Q63QJ0"/>
<dbReference type="STRING" id="272560.BPSL3032"/>
<dbReference type="KEGG" id="bps:BPSL3032"/>
<dbReference type="PATRIC" id="fig|272560.51.peg.2234"/>
<dbReference type="eggNOG" id="COG3116">
    <property type="taxonomic scope" value="Bacteria"/>
</dbReference>
<dbReference type="Proteomes" id="UP000000605">
    <property type="component" value="Chromosome 1"/>
</dbReference>
<dbReference type="GO" id="GO:0032153">
    <property type="term" value="C:cell division site"/>
    <property type="evidence" value="ECO:0007669"/>
    <property type="project" value="UniProtKB-UniRule"/>
</dbReference>
<dbReference type="GO" id="GO:0005886">
    <property type="term" value="C:plasma membrane"/>
    <property type="evidence" value="ECO:0007669"/>
    <property type="project" value="UniProtKB-SubCell"/>
</dbReference>
<dbReference type="GO" id="GO:0043093">
    <property type="term" value="P:FtsZ-dependent cytokinesis"/>
    <property type="evidence" value="ECO:0007669"/>
    <property type="project" value="UniProtKB-UniRule"/>
</dbReference>
<dbReference type="HAMAP" id="MF_00910">
    <property type="entry name" value="FtsL"/>
    <property type="match status" value="1"/>
</dbReference>
<dbReference type="InterPro" id="IPR011922">
    <property type="entry name" value="Cell_div_FtsL"/>
</dbReference>
<dbReference type="NCBIfam" id="TIGR02209">
    <property type="entry name" value="ftsL_broad"/>
    <property type="match status" value="1"/>
</dbReference>
<dbReference type="PANTHER" id="PTHR37479">
    <property type="entry name" value="CELL DIVISION PROTEIN FTSL"/>
    <property type="match status" value="1"/>
</dbReference>
<dbReference type="PANTHER" id="PTHR37479:SF1">
    <property type="entry name" value="CELL DIVISION PROTEIN FTSL"/>
    <property type="match status" value="1"/>
</dbReference>
<dbReference type="Pfam" id="PF04999">
    <property type="entry name" value="FtsL"/>
    <property type="match status" value="1"/>
</dbReference>
<reference key="1">
    <citation type="journal article" date="2004" name="Proc. Natl. Acad. Sci. U.S.A.">
        <title>Genomic plasticity of the causative agent of melioidosis, Burkholderia pseudomallei.</title>
        <authorList>
            <person name="Holden M.T.G."/>
            <person name="Titball R.W."/>
            <person name="Peacock S.J."/>
            <person name="Cerdeno-Tarraga A.-M."/>
            <person name="Atkins T."/>
            <person name="Crossman L.C."/>
            <person name="Pitt T."/>
            <person name="Churcher C."/>
            <person name="Mungall K.L."/>
            <person name="Bentley S.D."/>
            <person name="Sebaihia M."/>
            <person name="Thomson N.R."/>
            <person name="Bason N."/>
            <person name="Beacham I.R."/>
            <person name="Brooks K."/>
            <person name="Brown K.A."/>
            <person name="Brown N.F."/>
            <person name="Challis G.L."/>
            <person name="Cherevach I."/>
            <person name="Chillingworth T."/>
            <person name="Cronin A."/>
            <person name="Crossett B."/>
            <person name="Davis P."/>
            <person name="DeShazer D."/>
            <person name="Feltwell T."/>
            <person name="Fraser A."/>
            <person name="Hance Z."/>
            <person name="Hauser H."/>
            <person name="Holroyd S."/>
            <person name="Jagels K."/>
            <person name="Keith K.E."/>
            <person name="Maddison M."/>
            <person name="Moule S."/>
            <person name="Price C."/>
            <person name="Quail M.A."/>
            <person name="Rabbinowitsch E."/>
            <person name="Rutherford K."/>
            <person name="Sanders M."/>
            <person name="Simmonds M."/>
            <person name="Songsivilai S."/>
            <person name="Stevens K."/>
            <person name="Tumapa S."/>
            <person name="Vesaratchavest M."/>
            <person name="Whitehead S."/>
            <person name="Yeats C."/>
            <person name="Barrell B.G."/>
            <person name="Oyston P.C.F."/>
            <person name="Parkhill J."/>
        </authorList>
    </citation>
    <scope>NUCLEOTIDE SEQUENCE [LARGE SCALE GENOMIC DNA]</scope>
    <source>
        <strain>K96243</strain>
    </source>
</reference>
<comment type="function">
    <text evidence="1">Essential cell division protein. May link together the upstream cell division proteins, which are predominantly cytoplasmic, with the downstream cell division proteins, which are predominantly periplasmic.</text>
</comment>
<comment type="subunit">
    <text evidence="1">Part of a complex composed of FtsB, FtsL and FtsQ.</text>
</comment>
<comment type="subcellular location">
    <subcellularLocation>
        <location evidence="1">Cell inner membrane</location>
        <topology evidence="1">Single-pass type II membrane protein</topology>
    </subcellularLocation>
    <text evidence="1">Localizes to the division septum where it forms a ring structure.</text>
</comment>
<comment type="similarity">
    <text evidence="1">Belongs to the FtsL family.</text>
</comment>